<gene>
    <name evidence="1" type="primary">katG</name>
    <name type="synonym">cat</name>
    <name type="synonym">perA</name>
</gene>
<accession>P14412</accession>
<dbReference type="EC" id="1.11.1.21" evidence="1"/>
<dbReference type="EMBL" id="M29876">
    <property type="protein sequence ID" value="AAA22655.1"/>
    <property type="molecule type" value="mRNA"/>
</dbReference>
<dbReference type="EMBL" id="AB020234">
    <property type="protein sequence ID" value="BAA37114.1"/>
    <property type="molecule type" value="Genomic_DNA"/>
</dbReference>
<dbReference type="PIR" id="JS0520">
    <property type="entry name" value="JS0520"/>
</dbReference>
<dbReference type="SMR" id="P14412"/>
<dbReference type="PeroxiBase" id="2437">
    <property type="entry name" value="GstCP01"/>
</dbReference>
<dbReference type="GO" id="GO:0005829">
    <property type="term" value="C:cytosol"/>
    <property type="evidence" value="ECO:0007669"/>
    <property type="project" value="TreeGrafter"/>
</dbReference>
<dbReference type="GO" id="GO:0004096">
    <property type="term" value="F:catalase activity"/>
    <property type="evidence" value="ECO:0007669"/>
    <property type="project" value="UniProtKB-UniRule"/>
</dbReference>
<dbReference type="GO" id="GO:0020037">
    <property type="term" value="F:heme binding"/>
    <property type="evidence" value="ECO:0007669"/>
    <property type="project" value="InterPro"/>
</dbReference>
<dbReference type="GO" id="GO:0046872">
    <property type="term" value="F:metal ion binding"/>
    <property type="evidence" value="ECO:0007669"/>
    <property type="project" value="UniProtKB-KW"/>
</dbReference>
<dbReference type="GO" id="GO:0070301">
    <property type="term" value="P:cellular response to hydrogen peroxide"/>
    <property type="evidence" value="ECO:0007669"/>
    <property type="project" value="TreeGrafter"/>
</dbReference>
<dbReference type="GO" id="GO:0042744">
    <property type="term" value="P:hydrogen peroxide catabolic process"/>
    <property type="evidence" value="ECO:0007669"/>
    <property type="project" value="UniProtKB-KW"/>
</dbReference>
<dbReference type="CDD" id="cd00649">
    <property type="entry name" value="catalase_peroxidase_1"/>
    <property type="match status" value="1"/>
</dbReference>
<dbReference type="CDD" id="cd08200">
    <property type="entry name" value="catalase_peroxidase_2"/>
    <property type="match status" value="1"/>
</dbReference>
<dbReference type="FunFam" id="1.10.420.10:FF:000002">
    <property type="entry name" value="Catalase-peroxidase"/>
    <property type="match status" value="1"/>
</dbReference>
<dbReference type="FunFam" id="1.10.420.10:FF:000004">
    <property type="entry name" value="Catalase-peroxidase"/>
    <property type="match status" value="1"/>
</dbReference>
<dbReference type="FunFam" id="1.10.520.10:FF:000002">
    <property type="entry name" value="Catalase-peroxidase"/>
    <property type="match status" value="1"/>
</dbReference>
<dbReference type="Gene3D" id="1.10.520.10">
    <property type="match status" value="2"/>
</dbReference>
<dbReference type="Gene3D" id="1.10.420.10">
    <property type="entry name" value="Peroxidase, domain 2"/>
    <property type="match status" value="2"/>
</dbReference>
<dbReference type="HAMAP" id="MF_01961">
    <property type="entry name" value="Catal_peroxid"/>
    <property type="match status" value="1"/>
</dbReference>
<dbReference type="InterPro" id="IPR000763">
    <property type="entry name" value="Catalase_peroxidase"/>
</dbReference>
<dbReference type="InterPro" id="IPR002016">
    <property type="entry name" value="Haem_peroxidase"/>
</dbReference>
<dbReference type="InterPro" id="IPR010255">
    <property type="entry name" value="Haem_peroxidase_sf"/>
</dbReference>
<dbReference type="InterPro" id="IPR019794">
    <property type="entry name" value="Peroxidases_AS"/>
</dbReference>
<dbReference type="InterPro" id="IPR019793">
    <property type="entry name" value="Peroxidases_heam-ligand_BS"/>
</dbReference>
<dbReference type="NCBIfam" id="TIGR00198">
    <property type="entry name" value="cat_per_HPI"/>
    <property type="match status" value="1"/>
</dbReference>
<dbReference type="NCBIfam" id="NF011635">
    <property type="entry name" value="PRK15061.1"/>
    <property type="match status" value="1"/>
</dbReference>
<dbReference type="PANTHER" id="PTHR30555:SF6">
    <property type="entry name" value="CATALASE-PEROXIDASE"/>
    <property type="match status" value="1"/>
</dbReference>
<dbReference type="PANTHER" id="PTHR30555">
    <property type="entry name" value="HYDROPEROXIDASE I, BIFUNCTIONAL CATALASE-PEROXIDASE"/>
    <property type="match status" value="1"/>
</dbReference>
<dbReference type="Pfam" id="PF00141">
    <property type="entry name" value="peroxidase"/>
    <property type="match status" value="2"/>
</dbReference>
<dbReference type="PRINTS" id="PR00460">
    <property type="entry name" value="BPEROXIDASE"/>
</dbReference>
<dbReference type="PRINTS" id="PR00458">
    <property type="entry name" value="PEROXIDASE"/>
</dbReference>
<dbReference type="SUPFAM" id="SSF48113">
    <property type="entry name" value="Heme-dependent peroxidases"/>
    <property type="match status" value="2"/>
</dbReference>
<dbReference type="PROSITE" id="PS00435">
    <property type="entry name" value="PEROXIDASE_1"/>
    <property type="match status" value="1"/>
</dbReference>
<dbReference type="PROSITE" id="PS00436">
    <property type="entry name" value="PEROXIDASE_2"/>
    <property type="match status" value="1"/>
</dbReference>
<dbReference type="PROSITE" id="PS50873">
    <property type="entry name" value="PEROXIDASE_4"/>
    <property type="match status" value="1"/>
</dbReference>
<comment type="function">
    <text>Bifunctional enzyme with both catalase and broad-spectrum peroxidase activity. Also displays NADH oxidase, INH lyase and isonicotinoyl-NAD synthase activities.</text>
</comment>
<comment type="catalytic activity">
    <reaction evidence="1">
        <text>H2O2 + AH2 = A + 2 H2O</text>
        <dbReference type="Rhea" id="RHEA:30275"/>
        <dbReference type="ChEBI" id="CHEBI:13193"/>
        <dbReference type="ChEBI" id="CHEBI:15377"/>
        <dbReference type="ChEBI" id="CHEBI:16240"/>
        <dbReference type="ChEBI" id="CHEBI:17499"/>
        <dbReference type="EC" id="1.11.1.21"/>
    </reaction>
</comment>
<comment type="catalytic activity">
    <reaction evidence="1">
        <text>2 H2O2 = O2 + 2 H2O</text>
        <dbReference type="Rhea" id="RHEA:20309"/>
        <dbReference type="ChEBI" id="CHEBI:15377"/>
        <dbReference type="ChEBI" id="CHEBI:15379"/>
        <dbReference type="ChEBI" id="CHEBI:16240"/>
        <dbReference type="EC" id="1.11.1.21"/>
    </reaction>
</comment>
<comment type="cofactor">
    <cofactor>
        <name>heme b</name>
        <dbReference type="ChEBI" id="CHEBI:60344"/>
    </cofactor>
    <text>Binds 1 heme b (iron(II)-protoporphyrin IX) group per dimer.</text>
</comment>
<comment type="biophysicochemical properties">
    <kinetics>
        <KM evidence="3">90 mM for H(2)O(2) for the catalase reaction (at pH 5.5-6.0)</KM>
        <KM evidence="3">3.7 mM for H(2)O(2) for the catalase reaction (at pH 7.0)</KM>
        <KM evidence="3">210 mM for H(2)O(2) for the peroxidase reaction</KM>
        <KM evidence="3">31 mM for ABTS for the peroxidase reaction</KM>
        <Vmax evidence="3">5670.0 umol/min/mg enzyme for H(2)O(2) for the catalase reaction (at pH 5.5-6.0)</Vmax>
        <Vmax evidence="3">3410.0 umol/min/mg enzyme for H(2)O(2) for the catalase reaction (at pH 7.0)</Vmax>
        <Vmax evidence="3">8.0 umol/min/mg enzyme for ABTS for the peroxidase reaction</Vmax>
    </kinetics>
    <phDependence>
        <text evidence="3">Optimum pH is 4.0 for the peroxidase reaction.</text>
    </phDependence>
</comment>
<comment type="subunit">
    <text evidence="1">Homodimer or homotetramer.</text>
</comment>
<comment type="PTM">
    <text evidence="1">Formation of the three residue Trp-Tyr-Met cross-link is important for the catalase, but not the peroxidase activity of the enzyme.</text>
</comment>
<comment type="similarity">
    <text evidence="1">Belongs to the peroxidase family. Peroxidase/catalase subfamily.</text>
</comment>
<feature type="chain" id="PRO_0000055567" description="Catalase-peroxidase">
    <location>
        <begin position="1"/>
        <end position="735"/>
    </location>
</feature>
<feature type="region of interest" description="Disordered" evidence="2">
    <location>
        <begin position="1"/>
        <end position="30"/>
    </location>
</feature>
<feature type="compositionally biased region" description="Polar residues" evidence="2">
    <location>
        <begin position="1"/>
        <end position="10"/>
    </location>
</feature>
<feature type="compositionally biased region" description="Polar residues" evidence="2">
    <location>
        <begin position="17"/>
        <end position="26"/>
    </location>
</feature>
<feature type="active site" description="Proton acceptor" evidence="1">
    <location>
        <position position="101"/>
    </location>
</feature>
<feature type="binding site" description="axial binding residue" evidence="1">
    <location>
        <position position="264"/>
    </location>
    <ligand>
        <name>heme b</name>
        <dbReference type="ChEBI" id="CHEBI:60344"/>
    </ligand>
    <ligandPart>
        <name>Fe</name>
        <dbReference type="ChEBI" id="CHEBI:18248"/>
    </ligandPart>
</feature>
<feature type="site" description="Transition state stabilizer" evidence="1">
    <location>
        <position position="97"/>
    </location>
</feature>
<feature type="cross-link" description="Tryptophyl-tyrosyl-methioninium (Trp-Tyr) (with M-249)" evidence="1">
    <location>
        <begin position="100"/>
        <end position="223"/>
    </location>
</feature>
<feature type="cross-link" description="Tryptophyl-tyrosyl-methioninium (Tyr-Met) (with W-100)" evidence="1">
    <location>
        <begin position="223"/>
        <end position="249"/>
    </location>
</feature>
<sequence length="735" mass="82989">MENQNRQNAAQCPFHGSVTNQSSNRTTNKDWWPNQLNLSILHQHDRKTNPHDEEFNYAEEFQKLDYWALKEDLRKLMTESQDWWPADYGHYGPLFIRMAWHSAGTYRIGDGRGGASTGTQRFAPLNSWPDNANLDKARRLLWPIKKKYGNKISWADLFILAGNVAIESMGGKTIGFGGGRVDVWHPEEDVYWGSEKEWLASERYSGDRELENPLAAVQMGLIYVNPEGPDGKPDPKAAARDIRETFRRMGMNDEETVALIAGGHTFGKAHGAGPATHVGPEPEAAPIEAQGLGWISSYGKGKGSDTITSGIEGAWTPTPTQWDTSYFDMLFGYDWWLTKSPAGAWQWMAVDPDEKDLAPDAEDPSKKVPTMMMTTDLALRFDPEYEKIARRFHQNPEEFAEAFARAWFKLTHRDMGPKTRYLGPEVPKEDFIWQDPIPEVDYELTEAEIEEIKAKILNSGLTVSELVKTAWASASTFRNSDKRGGANGARIRLAPQKDWEVNEPERLAKVLSVYEDIQRELPKKVSIADLIVLGGSAAVEKAARDAGFDVKVPFFPGRGDATQEQTDVESFAVLEPFADGFRNYQKQEYSVPPEELLVDKAQLLGLTAPEMTVLVGGLRVLGANYRDLPHGVFTDRIGVLTNDFFVNLLDMNYEWVPTDSGIYEIRDRKTGEVRWTATRVDLIFGSNSILRSYAEFYAQDDNQEKFVRDFINAWVKVMNADRFDLVKKARESVTA</sequence>
<protein>
    <recommendedName>
        <fullName evidence="1">Catalase-peroxidase</fullName>
        <shortName evidence="1">CP</shortName>
        <ecNumber evidence="1">1.11.1.21</ecNumber>
    </recommendedName>
    <alternativeName>
        <fullName evidence="1">Peroxidase/catalase</fullName>
    </alternativeName>
</protein>
<name>KATG_GEOSE</name>
<keyword id="KW-0903">Direct protein sequencing</keyword>
<keyword id="KW-0349">Heme</keyword>
<keyword id="KW-0376">Hydrogen peroxide</keyword>
<keyword id="KW-0408">Iron</keyword>
<keyword id="KW-0479">Metal-binding</keyword>
<keyword id="KW-0560">Oxidoreductase</keyword>
<keyword id="KW-0575">Peroxidase</keyword>
<organism>
    <name type="scientific">Geobacillus stearothermophilus</name>
    <name type="common">Bacillus stearothermophilus</name>
    <dbReference type="NCBI Taxonomy" id="1422"/>
    <lineage>
        <taxon>Bacteria</taxon>
        <taxon>Bacillati</taxon>
        <taxon>Bacillota</taxon>
        <taxon>Bacilli</taxon>
        <taxon>Bacillales</taxon>
        <taxon>Anoxybacillaceae</taxon>
        <taxon>Geobacillus</taxon>
    </lineage>
</organism>
<proteinExistence type="evidence at protein level"/>
<reference key="1">
    <citation type="journal article" date="1989" name="J. Bacteriol.">
        <title>Cloning, nucleotide sequence, and expression in Escherichia coli of the Bacillus stearothermophilus peroxidase gene (perA).</title>
        <authorList>
            <person name="Loprasert S."/>
            <person name="Negoro S."/>
            <person name="Okada H."/>
        </authorList>
    </citation>
    <scope>NUCLEOTIDE SEQUENCE [GENOMIC DNA]</scope>
    <scope>PARTIAL PROTEIN SEQUENCE</scope>
    <source>
        <strain>ATCC 8005 / IAM11001</strain>
    </source>
</reference>
<reference key="2">
    <citation type="submission" date="1992-02" db="EMBL/GenBank/DDBJ databases">
        <authorList>
            <person name="Trakulnaleamsai S."/>
            <person name="Aihara S."/>
            <person name="Miyai K."/>
            <person name="Suga Y."/>
            <person name="Yomo T."/>
            <person name="Negoro S."/>
            <person name="Urabe I."/>
        </authorList>
    </citation>
    <scope>SEQUENCE REVISION</scope>
</reference>
<reference key="3">
    <citation type="journal article" date="1999" name="Nat. Biotechnol.">
        <title>Evolutionary molecular engineering by random elongation mutagenesis.</title>
        <authorList>
            <person name="Matsuura T."/>
            <person name="Miyai K."/>
            <person name="Trakulnaleaamsai S."/>
            <person name="Yomo T."/>
            <person name="Shima Y."/>
            <person name="Miki S."/>
            <person name="Yamamoto K."/>
            <person name="Urabe I."/>
        </authorList>
    </citation>
    <scope>NUCLEOTIDE SEQUENCE [GENOMIC DNA]</scope>
</reference>
<reference key="4">
    <citation type="journal article" date="2008" name="Arch. Biochem. Biophys.">
        <title>Comparative study of catalase-peroxidases (KatGs).</title>
        <authorList>
            <person name="Singh R."/>
            <person name="Wiseman B."/>
            <person name="Deemagarn T."/>
            <person name="Jha V."/>
            <person name="Switala J."/>
            <person name="Loewen P.C."/>
        </authorList>
    </citation>
    <scope>BIOPHYSICOCHEMICAL PROPERTIES</scope>
</reference>
<evidence type="ECO:0000255" key="1">
    <source>
        <dbReference type="HAMAP-Rule" id="MF_01961"/>
    </source>
</evidence>
<evidence type="ECO:0000256" key="2">
    <source>
        <dbReference type="SAM" id="MobiDB-lite"/>
    </source>
</evidence>
<evidence type="ECO:0000269" key="3">
    <source>
    </source>
</evidence>